<proteinExistence type="inferred from homology"/>
<accession>A3MS21</accession>
<sequence length="89" mass="9817">MQTVLIALLRFYKLAVSPLLGSRCRFYPSCSDYAREAIQYHGAARGTYLAARRLCRCHPFSAGGVDLVPPPNSDARNAPHEAEASSHRL</sequence>
<dbReference type="EMBL" id="CP000548">
    <property type="protein sequence ID" value="ABO04855.1"/>
    <property type="molecule type" value="Genomic_DNA"/>
</dbReference>
<dbReference type="KEGG" id="bmaz:BM44_2969"/>
<dbReference type="KEGG" id="bmn:BMA10247_3551"/>
<dbReference type="PATRIC" id="fig|320389.8.peg.3346"/>
<dbReference type="GO" id="GO:0005886">
    <property type="term" value="C:plasma membrane"/>
    <property type="evidence" value="ECO:0007669"/>
    <property type="project" value="UniProtKB-SubCell"/>
</dbReference>
<dbReference type="HAMAP" id="MF_00386">
    <property type="entry name" value="UPF0161_YidD"/>
    <property type="match status" value="1"/>
</dbReference>
<dbReference type="InterPro" id="IPR002696">
    <property type="entry name" value="Membr_insert_effic_factor_YidD"/>
</dbReference>
<dbReference type="NCBIfam" id="TIGR00278">
    <property type="entry name" value="membrane protein insertion efficiency factor YidD"/>
    <property type="match status" value="1"/>
</dbReference>
<dbReference type="PANTHER" id="PTHR33383">
    <property type="entry name" value="MEMBRANE PROTEIN INSERTION EFFICIENCY FACTOR-RELATED"/>
    <property type="match status" value="1"/>
</dbReference>
<dbReference type="PANTHER" id="PTHR33383:SF1">
    <property type="entry name" value="MEMBRANE PROTEIN INSERTION EFFICIENCY FACTOR-RELATED"/>
    <property type="match status" value="1"/>
</dbReference>
<dbReference type="Pfam" id="PF01809">
    <property type="entry name" value="YidD"/>
    <property type="match status" value="1"/>
</dbReference>
<dbReference type="SMART" id="SM01234">
    <property type="entry name" value="Haemolytic"/>
    <property type="match status" value="1"/>
</dbReference>
<comment type="function">
    <text evidence="1">Could be involved in insertion of integral membrane proteins into the membrane.</text>
</comment>
<comment type="subcellular location">
    <subcellularLocation>
        <location evidence="1">Cell inner membrane</location>
        <topology evidence="1">Peripheral membrane protein</topology>
        <orientation evidence="1">Cytoplasmic side</orientation>
    </subcellularLocation>
</comment>
<comment type="similarity">
    <text evidence="1">Belongs to the UPF0161 family.</text>
</comment>
<reference key="1">
    <citation type="journal article" date="2010" name="Genome Biol. Evol.">
        <title>Continuing evolution of Burkholderia mallei through genome reduction and large-scale rearrangements.</title>
        <authorList>
            <person name="Losada L."/>
            <person name="Ronning C.M."/>
            <person name="DeShazer D."/>
            <person name="Woods D."/>
            <person name="Fedorova N."/>
            <person name="Kim H.S."/>
            <person name="Shabalina S.A."/>
            <person name="Pearson T.R."/>
            <person name="Brinkac L."/>
            <person name="Tan P."/>
            <person name="Nandi T."/>
            <person name="Crabtree J."/>
            <person name="Badger J."/>
            <person name="Beckstrom-Sternberg S."/>
            <person name="Saqib M."/>
            <person name="Schutzer S.E."/>
            <person name="Keim P."/>
            <person name="Nierman W.C."/>
        </authorList>
    </citation>
    <scope>NUCLEOTIDE SEQUENCE [LARGE SCALE GENOMIC DNA]</scope>
    <source>
        <strain>NCTC 10247</strain>
    </source>
</reference>
<gene>
    <name type="ordered locus">BMA10247_3551</name>
</gene>
<name>YIDD_BURM7</name>
<feature type="chain" id="PRO_1000013070" description="Putative membrane protein insertion efficiency factor">
    <location>
        <begin position="1"/>
        <end position="89"/>
    </location>
</feature>
<feature type="region of interest" description="Disordered" evidence="2">
    <location>
        <begin position="68"/>
        <end position="89"/>
    </location>
</feature>
<feature type="compositionally biased region" description="Basic and acidic residues" evidence="2">
    <location>
        <begin position="77"/>
        <end position="89"/>
    </location>
</feature>
<organism>
    <name type="scientific">Burkholderia mallei (strain NCTC 10247)</name>
    <dbReference type="NCBI Taxonomy" id="320389"/>
    <lineage>
        <taxon>Bacteria</taxon>
        <taxon>Pseudomonadati</taxon>
        <taxon>Pseudomonadota</taxon>
        <taxon>Betaproteobacteria</taxon>
        <taxon>Burkholderiales</taxon>
        <taxon>Burkholderiaceae</taxon>
        <taxon>Burkholderia</taxon>
        <taxon>pseudomallei group</taxon>
    </lineage>
</organism>
<evidence type="ECO:0000255" key="1">
    <source>
        <dbReference type="HAMAP-Rule" id="MF_00386"/>
    </source>
</evidence>
<evidence type="ECO:0000256" key="2">
    <source>
        <dbReference type="SAM" id="MobiDB-lite"/>
    </source>
</evidence>
<keyword id="KW-0997">Cell inner membrane</keyword>
<keyword id="KW-1003">Cell membrane</keyword>
<keyword id="KW-0472">Membrane</keyword>
<protein>
    <recommendedName>
        <fullName evidence="1">Putative membrane protein insertion efficiency factor</fullName>
    </recommendedName>
</protein>